<organism>
    <name type="scientific">Bacillus cytotoxicus (strain DSM 22905 / CIP 110041 / 391-98 / NVH 391-98)</name>
    <dbReference type="NCBI Taxonomy" id="315749"/>
    <lineage>
        <taxon>Bacteria</taxon>
        <taxon>Bacillati</taxon>
        <taxon>Bacillota</taxon>
        <taxon>Bacilli</taxon>
        <taxon>Bacillales</taxon>
        <taxon>Bacillaceae</taxon>
        <taxon>Bacillus</taxon>
        <taxon>Bacillus cereus group</taxon>
    </lineage>
</organism>
<dbReference type="EC" id="2.1.1.182" evidence="1"/>
<dbReference type="EMBL" id="CP000764">
    <property type="protein sequence ID" value="ABS20411.1"/>
    <property type="molecule type" value="Genomic_DNA"/>
</dbReference>
<dbReference type="RefSeq" id="WP_011983181.1">
    <property type="nucleotide sequence ID" value="NC_009674.1"/>
</dbReference>
<dbReference type="SMR" id="A7GJV3"/>
<dbReference type="STRING" id="315749.Bcer98_0036"/>
<dbReference type="GeneID" id="33895340"/>
<dbReference type="KEGG" id="bcy:Bcer98_0036"/>
<dbReference type="eggNOG" id="COG0030">
    <property type="taxonomic scope" value="Bacteria"/>
</dbReference>
<dbReference type="HOGENOM" id="CLU_041220_0_0_9"/>
<dbReference type="OrthoDB" id="9814755at2"/>
<dbReference type="Proteomes" id="UP000002300">
    <property type="component" value="Chromosome"/>
</dbReference>
<dbReference type="GO" id="GO:0005829">
    <property type="term" value="C:cytosol"/>
    <property type="evidence" value="ECO:0007669"/>
    <property type="project" value="TreeGrafter"/>
</dbReference>
<dbReference type="GO" id="GO:0052908">
    <property type="term" value="F:16S rRNA (adenine(1518)-N(6)/adenine(1519)-N(6))-dimethyltransferase activity"/>
    <property type="evidence" value="ECO:0007669"/>
    <property type="project" value="UniProtKB-EC"/>
</dbReference>
<dbReference type="GO" id="GO:0003723">
    <property type="term" value="F:RNA binding"/>
    <property type="evidence" value="ECO:0007669"/>
    <property type="project" value="UniProtKB-KW"/>
</dbReference>
<dbReference type="CDD" id="cd02440">
    <property type="entry name" value="AdoMet_MTases"/>
    <property type="match status" value="1"/>
</dbReference>
<dbReference type="FunFam" id="1.10.8.100:FF:000002">
    <property type="entry name" value="Ribosomal RNA small subunit methyltransferase A"/>
    <property type="match status" value="1"/>
</dbReference>
<dbReference type="FunFam" id="3.40.50.150:FF:000023">
    <property type="entry name" value="Ribosomal RNA small subunit methyltransferase A"/>
    <property type="match status" value="1"/>
</dbReference>
<dbReference type="Gene3D" id="1.10.8.100">
    <property type="entry name" value="Ribosomal RNA adenine dimethylase-like, domain 2"/>
    <property type="match status" value="1"/>
</dbReference>
<dbReference type="Gene3D" id="3.40.50.150">
    <property type="entry name" value="Vaccinia Virus protein VP39"/>
    <property type="match status" value="1"/>
</dbReference>
<dbReference type="HAMAP" id="MF_00607">
    <property type="entry name" value="16SrRNA_methyltr_A"/>
    <property type="match status" value="1"/>
</dbReference>
<dbReference type="InterPro" id="IPR001737">
    <property type="entry name" value="KsgA/Erm"/>
</dbReference>
<dbReference type="InterPro" id="IPR023165">
    <property type="entry name" value="rRNA_Ade_diMease-like_C"/>
</dbReference>
<dbReference type="InterPro" id="IPR020596">
    <property type="entry name" value="rRNA_Ade_Mease_Trfase_CS"/>
</dbReference>
<dbReference type="InterPro" id="IPR020598">
    <property type="entry name" value="rRNA_Ade_methylase_Trfase_N"/>
</dbReference>
<dbReference type="InterPro" id="IPR011530">
    <property type="entry name" value="rRNA_adenine_dimethylase"/>
</dbReference>
<dbReference type="InterPro" id="IPR029063">
    <property type="entry name" value="SAM-dependent_MTases_sf"/>
</dbReference>
<dbReference type="NCBIfam" id="TIGR00755">
    <property type="entry name" value="ksgA"/>
    <property type="match status" value="1"/>
</dbReference>
<dbReference type="PANTHER" id="PTHR11727">
    <property type="entry name" value="DIMETHYLADENOSINE TRANSFERASE"/>
    <property type="match status" value="1"/>
</dbReference>
<dbReference type="PANTHER" id="PTHR11727:SF7">
    <property type="entry name" value="DIMETHYLADENOSINE TRANSFERASE-RELATED"/>
    <property type="match status" value="1"/>
</dbReference>
<dbReference type="Pfam" id="PF00398">
    <property type="entry name" value="RrnaAD"/>
    <property type="match status" value="1"/>
</dbReference>
<dbReference type="SMART" id="SM00650">
    <property type="entry name" value="rADc"/>
    <property type="match status" value="1"/>
</dbReference>
<dbReference type="SUPFAM" id="SSF53335">
    <property type="entry name" value="S-adenosyl-L-methionine-dependent methyltransferases"/>
    <property type="match status" value="1"/>
</dbReference>
<dbReference type="PROSITE" id="PS01131">
    <property type="entry name" value="RRNA_A_DIMETH"/>
    <property type="match status" value="1"/>
</dbReference>
<dbReference type="PROSITE" id="PS51689">
    <property type="entry name" value="SAM_RNA_A_N6_MT"/>
    <property type="match status" value="1"/>
</dbReference>
<sequence>MKDIATPNRTKDIVEKYGFSFKKSLGQNFLIDTNVLNRIVDYAEIGPKGGAIEIGPGIGALTEQLAKRAKKVVAFEIDQRLLPILDETLAPYDNVTIINKDVLKANVHEVFQEQFEEGQDVMVVANLPYYVTTPILFKLLEEKLPVRGFVVMMQKEVGDRLAAKPGTKDYGSLSIAIQYYTEVETVMTVPRTVFVPQPNVDSSVIRLLKRPKPIVEVIDEKFFFEVVRASFAQRRKTLMNNLSNNLNDFPKDKELLERILTEIGIDPKRRGETLSIEEFAMLSNALVPHKMK</sequence>
<comment type="function">
    <text evidence="1">Specifically dimethylates two adjacent adenosines (A1518 and A1519) in the loop of a conserved hairpin near the 3'-end of 16S rRNA in the 30S particle. May play a critical role in biogenesis of 30S subunits.</text>
</comment>
<comment type="catalytic activity">
    <reaction evidence="1">
        <text>adenosine(1518)/adenosine(1519) in 16S rRNA + 4 S-adenosyl-L-methionine = N(6)-dimethyladenosine(1518)/N(6)-dimethyladenosine(1519) in 16S rRNA + 4 S-adenosyl-L-homocysteine + 4 H(+)</text>
        <dbReference type="Rhea" id="RHEA:19609"/>
        <dbReference type="Rhea" id="RHEA-COMP:10232"/>
        <dbReference type="Rhea" id="RHEA-COMP:10233"/>
        <dbReference type="ChEBI" id="CHEBI:15378"/>
        <dbReference type="ChEBI" id="CHEBI:57856"/>
        <dbReference type="ChEBI" id="CHEBI:59789"/>
        <dbReference type="ChEBI" id="CHEBI:74411"/>
        <dbReference type="ChEBI" id="CHEBI:74493"/>
        <dbReference type="EC" id="2.1.1.182"/>
    </reaction>
</comment>
<comment type="subcellular location">
    <subcellularLocation>
        <location evidence="1">Cytoplasm</location>
    </subcellularLocation>
</comment>
<comment type="similarity">
    <text evidence="1">Belongs to the class I-like SAM-binding methyltransferase superfamily. rRNA adenine N(6)-methyltransferase family. RsmA subfamily.</text>
</comment>
<gene>
    <name evidence="1" type="primary">rsmA</name>
    <name evidence="1" type="synonym">ksgA</name>
    <name type="ordered locus">Bcer98_0036</name>
</gene>
<protein>
    <recommendedName>
        <fullName evidence="1">Ribosomal RNA small subunit methyltransferase A</fullName>
        <ecNumber evidence="1">2.1.1.182</ecNumber>
    </recommendedName>
    <alternativeName>
        <fullName evidence="1">16S rRNA (adenine(1518)-N(6)/adenine(1519)-N(6))-dimethyltransferase</fullName>
    </alternativeName>
    <alternativeName>
        <fullName evidence="1">16S rRNA dimethyladenosine transferase</fullName>
    </alternativeName>
    <alternativeName>
        <fullName evidence="1">16S rRNA dimethylase</fullName>
    </alternativeName>
    <alternativeName>
        <fullName evidence="1">S-adenosylmethionine-6-N', N'-adenosyl(rRNA) dimethyltransferase</fullName>
    </alternativeName>
</protein>
<evidence type="ECO:0000255" key="1">
    <source>
        <dbReference type="HAMAP-Rule" id="MF_00607"/>
    </source>
</evidence>
<feature type="chain" id="PRO_1000082544" description="Ribosomal RNA small subunit methyltransferase A">
    <location>
        <begin position="1"/>
        <end position="292"/>
    </location>
</feature>
<feature type="binding site" evidence="1">
    <location>
        <position position="28"/>
    </location>
    <ligand>
        <name>S-adenosyl-L-methionine</name>
        <dbReference type="ChEBI" id="CHEBI:59789"/>
    </ligand>
</feature>
<feature type="binding site" evidence="1">
    <location>
        <position position="30"/>
    </location>
    <ligand>
        <name>S-adenosyl-L-methionine</name>
        <dbReference type="ChEBI" id="CHEBI:59789"/>
    </ligand>
</feature>
<feature type="binding site" evidence="1">
    <location>
        <position position="55"/>
    </location>
    <ligand>
        <name>S-adenosyl-L-methionine</name>
        <dbReference type="ChEBI" id="CHEBI:59789"/>
    </ligand>
</feature>
<feature type="binding site" evidence="1">
    <location>
        <position position="76"/>
    </location>
    <ligand>
        <name>S-adenosyl-L-methionine</name>
        <dbReference type="ChEBI" id="CHEBI:59789"/>
    </ligand>
</feature>
<feature type="binding site" evidence="1">
    <location>
        <position position="101"/>
    </location>
    <ligand>
        <name>S-adenosyl-L-methionine</name>
        <dbReference type="ChEBI" id="CHEBI:59789"/>
    </ligand>
</feature>
<feature type="binding site" evidence="1">
    <location>
        <position position="126"/>
    </location>
    <ligand>
        <name>S-adenosyl-L-methionine</name>
        <dbReference type="ChEBI" id="CHEBI:59789"/>
    </ligand>
</feature>
<reference key="1">
    <citation type="journal article" date="2008" name="Chem. Biol. Interact.">
        <title>Extending the Bacillus cereus group genomics to putative food-borne pathogens of different toxicity.</title>
        <authorList>
            <person name="Lapidus A."/>
            <person name="Goltsman E."/>
            <person name="Auger S."/>
            <person name="Galleron N."/>
            <person name="Segurens B."/>
            <person name="Dossat C."/>
            <person name="Land M.L."/>
            <person name="Broussolle V."/>
            <person name="Brillard J."/>
            <person name="Guinebretiere M.-H."/>
            <person name="Sanchis V."/>
            <person name="Nguen-the C."/>
            <person name="Lereclus D."/>
            <person name="Richardson P."/>
            <person name="Wincker P."/>
            <person name="Weissenbach J."/>
            <person name="Ehrlich S.D."/>
            <person name="Sorokin A."/>
        </authorList>
    </citation>
    <scope>NUCLEOTIDE SEQUENCE [LARGE SCALE GENOMIC DNA]</scope>
    <source>
        <strain>DSM 22905 / CIP 110041 / 391-98 / NVH 391-98</strain>
    </source>
</reference>
<proteinExistence type="inferred from homology"/>
<accession>A7GJV3</accession>
<keyword id="KW-0963">Cytoplasm</keyword>
<keyword id="KW-0489">Methyltransferase</keyword>
<keyword id="KW-0694">RNA-binding</keyword>
<keyword id="KW-0698">rRNA processing</keyword>
<keyword id="KW-0949">S-adenosyl-L-methionine</keyword>
<keyword id="KW-0808">Transferase</keyword>
<name>RSMA_BACCN</name>